<organism>
    <name type="scientific">Clostridium acetobutylicum (strain ATCC 824 / DSM 792 / JCM 1419 / IAM 19013 / LMG 5710 / NBRC 13948 / NRRL B-527 / VKM B-1787 / 2291 / W)</name>
    <dbReference type="NCBI Taxonomy" id="272562"/>
    <lineage>
        <taxon>Bacteria</taxon>
        <taxon>Bacillati</taxon>
        <taxon>Bacillota</taxon>
        <taxon>Clostridia</taxon>
        <taxon>Eubacteriales</taxon>
        <taxon>Clostridiaceae</taxon>
        <taxon>Clostridium</taxon>
    </lineage>
</organism>
<sequence length="181" mass="20093">MKKFKCVVCGYIYTGEDAPEKCPVCGAGKDKFVEVKDEGEGWADEHKIGVAKGVDKEVLEGLRANFTGECTEVGMYLAMARQADREGYPEVAEAYKRIAFEEAEHASKFAELLGEVVVADTKTNLQMRVDAEKGACEGKKELATLAKKLNYDAIHDTVHEMCKDEARHGSAFRGLLNRYFK</sequence>
<accession>Q97D82</accession>
<feature type="chain" id="PRO_0000405534" description="Reverse rubrerythrin-1">
    <location>
        <begin position="1"/>
        <end position="181"/>
    </location>
</feature>
<feature type="domain" description="Rubredoxin-like" evidence="3">
    <location>
        <begin position="1"/>
        <end position="35"/>
    </location>
</feature>
<feature type="domain" description="Ferritin-like diiron" evidence="2">
    <location>
        <begin position="52"/>
        <end position="181"/>
    </location>
</feature>
<feature type="binding site" evidence="1">
    <location>
        <position position="6"/>
    </location>
    <ligand>
        <name>Fe cation</name>
        <dbReference type="ChEBI" id="CHEBI:24875"/>
        <label>1</label>
    </ligand>
</feature>
<feature type="binding site" evidence="1">
    <location>
        <position position="9"/>
    </location>
    <ligand>
        <name>Fe cation</name>
        <dbReference type="ChEBI" id="CHEBI:24875"/>
        <label>1</label>
    </ligand>
</feature>
<feature type="binding site" evidence="1">
    <location>
        <position position="22"/>
    </location>
    <ligand>
        <name>Fe cation</name>
        <dbReference type="ChEBI" id="CHEBI:24875"/>
        <label>1</label>
    </ligand>
</feature>
<feature type="binding site" evidence="1">
    <location>
        <position position="25"/>
    </location>
    <ligand>
        <name>Fe cation</name>
        <dbReference type="ChEBI" id="CHEBI:24875"/>
        <label>1</label>
    </ligand>
</feature>
<feature type="binding site" evidence="1">
    <location>
        <position position="69"/>
    </location>
    <ligand>
        <name>Fe cation</name>
        <dbReference type="ChEBI" id="CHEBI:24875"/>
        <label>2</label>
    </ligand>
</feature>
<feature type="binding site" evidence="1">
    <location>
        <position position="102"/>
    </location>
    <ligand>
        <name>Fe cation</name>
        <dbReference type="ChEBI" id="CHEBI:24875"/>
        <label>2</label>
    </ligand>
</feature>
<feature type="binding site" evidence="1">
    <location>
        <position position="102"/>
    </location>
    <ligand>
        <name>Fe cation</name>
        <dbReference type="ChEBI" id="CHEBI:24875"/>
        <label>3</label>
    </ligand>
</feature>
<feature type="binding site" evidence="1">
    <location>
        <position position="132"/>
    </location>
    <ligand>
        <name>Fe cation</name>
        <dbReference type="ChEBI" id="CHEBI:24875"/>
        <label>3</label>
    </ligand>
</feature>
<feature type="binding site" evidence="1">
    <location>
        <position position="165"/>
    </location>
    <ligand>
        <name>Fe cation</name>
        <dbReference type="ChEBI" id="CHEBI:24875"/>
        <label>2</label>
    </ligand>
</feature>
<feature type="binding site" evidence="1">
    <location>
        <position position="165"/>
    </location>
    <ligand>
        <name>Fe cation</name>
        <dbReference type="ChEBI" id="CHEBI:24875"/>
        <label>3</label>
    </ligand>
</feature>
<feature type="binding site" evidence="1">
    <location>
        <position position="168"/>
    </location>
    <ligand>
        <name>Fe cation</name>
        <dbReference type="ChEBI" id="CHEBI:24875"/>
        <label>3</label>
    </ligand>
</feature>
<reference key="1">
    <citation type="journal article" date="2001" name="J. Bacteriol.">
        <title>Genome sequence and comparative analysis of the solvent-producing bacterium Clostridium acetobutylicum.</title>
        <authorList>
            <person name="Noelling J."/>
            <person name="Breton G."/>
            <person name="Omelchenko M.V."/>
            <person name="Makarova K.S."/>
            <person name="Zeng Q."/>
            <person name="Gibson R."/>
            <person name="Lee H.M."/>
            <person name="Dubois J."/>
            <person name="Qiu D."/>
            <person name="Hitti J."/>
            <person name="Wolf Y.I."/>
            <person name="Tatusov R.L."/>
            <person name="Sabathe F."/>
            <person name="Doucette-Stamm L.A."/>
            <person name="Soucaille P."/>
            <person name="Daly M.J."/>
            <person name="Bennett G.N."/>
            <person name="Koonin E.V."/>
            <person name="Smith D.R."/>
        </authorList>
    </citation>
    <scope>NUCLEOTIDE SEQUENCE [LARGE SCALE GENOMIC DNA]</scope>
    <source>
        <strain>ATCC 824 / DSM 792 / JCM 1419 / IAM 19013 / LMG 5710 / NBRC 13948 / NRRL B-527 / VKM B-1787 / 2291 / W</strain>
    </source>
</reference>
<reference key="2">
    <citation type="journal article" date="2004" name="FEMS Microbiol. Lett.">
        <title>A rubrerythrin-like oxidative stress protein of Clostridium acetobutylicum is encoded by a duplicated gene and identical to the heat shock protein Hsp21.</title>
        <authorList>
            <person name="May A."/>
            <person name="Hillmann F."/>
            <person name="Riebe O."/>
            <person name="Fischer R.J."/>
            <person name="Bahl H."/>
        </authorList>
    </citation>
    <scope>PROTEIN SEQUENCE OF 1-20</scope>
    <scope>GENE NAME</scope>
    <scope>INDUCTION BY HEAT; AIR AND H(2)O(2)</scope>
    <source>
        <strain>ATCC 824 / DSM 792 / JCM 1419 / IAM 19013 / LMG 5710 / NBRC 13948 / NRRL B-527 / VKM B-1787 / 2291 / W</strain>
    </source>
</reference>
<reference key="3">
    <citation type="journal article" date="2004" name="FEBS Lett.">
        <title>Identification of O2-induced peptides in an obligatory anaerobe, Clostridium acetobutylicum.</title>
        <authorList>
            <person name="Kawasaki S."/>
            <person name="Ishikura J."/>
            <person name="Watamura Y."/>
            <person name="Niimura Y."/>
        </authorList>
    </citation>
    <scope>IDENTIFICATION BY MASS SPECTROMETRY</scope>
    <scope>INDUCTION BY O(2)</scope>
    <source>
        <strain>ATCC 824 / DSM 792 / JCM 1419 / IAM 19013 / LMG 5710 / NBRC 13948 / NRRL B-527 / VKM B-1787 / 2291 / W</strain>
    </source>
</reference>
<reference key="4">
    <citation type="journal article" date="2006" name="Arch. Microbiol.">
        <title>The rubrerythrin-like protein Hsp21 of Clostridium acetobutylicum is a general stress protein.</title>
        <authorList>
            <person name="Hillmann F."/>
            <person name="Fischer R.J."/>
            <person name="Bahl H."/>
        </authorList>
    </citation>
    <scope>INDUCTION BY VARIOUS ENVIRONMENTAL STRESS CONDITIONS</scope>
    <source>
        <strain>ATCC 824 / DSM 792 / JCM 1419 / IAM 19013 / LMG 5710 / NBRC 13948 / NRRL B-527 / VKM B-1787 / 2291 / W</strain>
    </source>
</reference>
<reference key="5">
    <citation type="journal article" date="2007" name="FEBS Lett.">
        <title>An O2-inducible rubrerythrin-like protein, rubperoxin, is functional as a H2O2 reductase in an obligatory anaerobe Clostridium acetobutylicum.</title>
        <authorList>
            <person name="Kawasaki S."/>
            <person name="Ono M."/>
            <person name="Watamura Y."/>
            <person name="Sakai Y."/>
            <person name="Satoh T."/>
            <person name="Arai T."/>
            <person name="Satoh J."/>
            <person name="Niimura Y."/>
        </authorList>
    </citation>
    <scope>H(2)O(2) REDUCTASE ACTIVITY</scope>
    <scope>IRON-BINDING</scope>
    <scope>SUBUNIT</scope>
    <source>
        <strain>ATCC 824 / DSM 792 / JCM 1419 / IAM 19013 / LMG 5710 / NBRC 13948 / NRRL B-527 / VKM B-1787 / 2291 / W</strain>
    </source>
</reference>
<reference key="6">
    <citation type="journal article" date="2008" name="Mol. Microbiol.">
        <title>PerR acts as a switch for oxygen tolerance in the strict anaerobe Clostridium acetobutylicum.</title>
        <authorList>
            <person name="Hillmann F."/>
            <person name="Fischer R.J."/>
            <person name="Saint-Prix F."/>
            <person name="Girbal L."/>
            <person name="Bahl H."/>
        </authorList>
    </citation>
    <scope>REPRESSION BY PERR</scope>
    <source>
        <strain>ATCC 824 / DSM 792 / JCM 1419 / IAM 19013 / LMG 5710 / NBRC 13948 / NRRL B-527 / VKM B-1787 / 2291 / W</strain>
    </source>
</reference>
<reference key="7">
    <citation type="journal article" date="2009" name="Appl. Environ. Microbiol.">
        <title>O2 and reactive oxygen species detoxification complex, composed of O2-responsive NADH:rubredoxin oxidoreductase-flavoprotein A2-desulfoferrodoxin operon enzymes, rubperoxin, and rubredoxin, in Clostridium acetobutylicum.</title>
        <authorList>
            <person name="Kawasaki S."/>
            <person name="Sakai Y."/>
            <person name="Takahashi T."/>
            <person name="Suzuki I."/>
            <person name="Niimura Y."/>
        </authorList>
    </citation>
    <scope>FUNCTION</scope>
    <scope>CATALYTIC ACTIVITY</scope>
    <source>
        <strain>ATCC 824 / DSM 792 / JCM 1419 / IAM 19013 / LMG 5710 / NBRC 13948 / NRRL B-527 / VKM B-1787 / 2291 / W</strain>
    </source>
</reference>
<reference key="8">
    <citation type="journal article" date="2009" name="J. Bacteriol.">
        <title>The role of PerR in O2-affected gene expression of Clostridium acetobutylicum.</title>
        <authorList>
            <person name="Hillmann F."/>
            <person name="Doring C."/>
            <person name="Riebe O."/>
            <person name="Ehrenreich A."/>
            <person name="Fischer R.J."/>
            <person name="Bahl H."/>
        </authorList>
    </citation>
    <scope>INDUCTION BY O(2)</scope>
    <scope>REPRESSION BY PERR</scope>
    <source>
        <strain>ATCC 824 / DSM 792 / JCM 1419 / IAM 19013 / LMG 5710 / NBRC 13948 / NRRL B-527 / VKM B-1787 / 2291 / W</strain>
    </source>
</reference>
<comment type="function">
    <text evidence="9">Functions as the terminal component of an NADH peroxidase (NADH:H(2)O(2) oxidoreductase) when using NADH:rubredoxin oxidoreductase (NROR) and rubredoxin (Rd) as electron transport intermediaries from NADH to revRbr 1. Plays an important role in the oxidative stress defense system in C.acetobutylicum, an obligate anaerobic bacterium. Also exhibits NADH oxidase (NADH:O(2) oxidoreductase) activity in vitro, which is 100-fold lesser than that of FprA1/2 using the same electron transfer components. Therefore, its predominant function is most likely as a scavenger of its preferred substrate, H(2)O(2).</text>
</comment>
<comment type="catalytic activity">
    <reaction evidence="9">
        <text>H2O2 + NADH + H(+) = NAD(+) + 2 H2O</text>
        <dbReference type="Rhea" id="RHEA:18509"/>
        <dbReference type="ChEBI" id="CHEBI:15377"/>
        <dbReference type="ChEBI" id="CHEBI:15378"/>
        <dbReference type="ChEBI" id="CHEBI:16240"/>
        <dbReference type="ChEBI" id="CHEBI:57540"/>
        <dbReference type="ChEBI" id="CHEBI:57945"/>
        <dbReference type="EC" id="1.11.1.1"/>
    </reaction>
</comment>
<comment type="cofactor">
    <cofactor evidence="1">
        <name>Fe(3+)</name>
        <dbReference type="ChEBI" id="CHEBI:29034"/>
    </cofactor>
    <text evidence="1">Binds 3 Fe(3+) ions per subunit.</text>
</comment>
<comment type="subunit">
    <text evidence="7">Homodimer.</text>
</comment>
<comment type="induction">
    <text evidence="4 5 6 8 10">Up-regulated by heat and oxidative stress (exposure to air, O(2) and H(2)O(2)) (at mRNA and protein levels). Various other environmental stress conditions such as an increase of the pH of the growth medium from 4.5 to 6.2, addition of the salt NaCl or of the solvent butanol, and lowering the incubation temperature also result in transiently increased transcript levels. Is also expressed under non-stressful conditions. Repressed by PerR.</text>
</comment>
<comment type="miscellaneous">
    <text>This protein has been named 'reverse' rubrerythrin (revRbr) because the order of the two functional domains is reversed compared to 'classical' rubrerythrins: the rubredoxin-like FeS4 domain is located at the N-terminus and the ferritin-like diiron domain at the C-terminus.</text>
</comment>
<gene>
    <name type="primary">rbr3A</name>
    <name type="synonym">hsp21</name>
    <name type="synonym">rpr1</name>
    <name type="ordered locus">CA_C3598</name>
</gene>
<keyword id="KW-0216">Detoxification</keyword>
<keyword id="KW-0903">Direct protein sequencing</keyword>
<keyword id="KW-0249">Electron transport</keyword>
<keyword id="KW-0408">Iron</keyword>
<keyword id="KW-0479">Metal-binding</keyword>
<keyword id="KW-0520">NAD</keyword>
<keyword id="KW-0560">Oxidoreductase</keyword>
<keyword id="KW-0575">Peroxidase</keyword>
<keyword id="KW-1185">Reference proteome</keyword>
<keyword id="KW-0346">Stress response</keyword>
<keyword id="KW-0813">Transport</keyword>
<name>RRBR1_CLOAB</name>
<protein>
    <recommendedName>
        <fullName>Reverse rubrerythrin-1</fullName>
        <shortName>revRbr 1</shortName>
    </recommendedName>
    <alternativeName>
        <fullName>NADH peroxidase</fullName>
        <shortName>NPXase</shortName>
        <shortName>Npx</shortName>
        <ecNumber>1.11.1.1</ecNumber>
    </alternativeName>
    <alternativeName>
        <fullName>Rubperoxin 1</fullName>
        <shortName>Rpr 1</shortName>
    </alternativeName>
</protein>
<dbReference type="EC" id="1.11.1.1"/>
<dbReference type="EMBL" id="AE001437">
    <property type="protein sequence ID" value="AAK81521.1"/>
    <property type="molecule type" value="Genomic_DNA"/>
</dbReference>
<dbReference type="PIR" id="F97341">
    <property type="entry name" value="F97341"/>
</dbReference>
<dbReference type="RefSeq" id="NP_350181.1">
    <property type="nucleotide sequence ID" value="NC_003030.1"/>
</dbReference>
<dbReference type="RefSeq" id="WP_010966861.1">
    <property type="nucleotide sequence ID" value="NC_003030.1"/>
</dbReference>
<dbReference type="SMR" id="Q97D82"/>
<dbReference type="STRING" id="272562.CA_C3598"/>
<dbReference type="GeneID" id="45000096"/>
<dbReference type="KEGG" id="cac:CA_C3598"/>
<dbReference type="PATRIC" id="fig|272562.8.peg.3787"/>
<dbReference type="eggNOG" id="COG1592">
    <property type="taxonomic scope" value="Bacteria"/>
</dbReference>
<dbReference type="eggNOG" id="COG1773">
    <property type="taxonomic scope" value="Bacteria"/>
</dbReference>
<dbReference type="HOGENOM" id="CLU_113705_1_0_9"/>
<dbReference type="OrthoDB" id="9805587at2"/>
<dbReference type="Proteomes" id="UP000000814">
    <property type="component" value="Chromosome"/>
</dbReference>
<dbReference type="GO" id="GO:0009055">
    <property type="term" value="F:electron transfer activity"/>
    <property type="evidence" value="ECO:0000250"/>
    <property type="project" value="UniProtKB"/>
</dbReference>
<dbReference type="GO" id="GO:0005506">
    <property type="term" value="F:iron ion binding"/>
    <property type="evidence" value="ECO:0000250"/>
    <property type="project" value="UniProtKB"/>
</dbReference>
<dbReference type="GO" id="GO:0016692">
    <property type="term" value="F:NADH peroxidase activity"/>
    <property type="evidence" value="ECO:0000250"/>
    <property type="project" value="UniProtKB"/>
</dbReference>
<dbReference type="GO" id="GO:0071469">
    <property type="term" value="P:cellular response to alkaline pH"/>
    <property type="evidence" value="ECO:0000314"/>
    <property type="project" value="UniProtKB"/>
</dbReference>
<dbReference type="GO" id="GO:0070417">
    <property type="term" value="P:cellular response to cold"/>
    <property type="evidence" value="ECO:0000314"/>
    <property type="project" value="UniProtKB"/>
</dbReference>
<dbReference type="GO" id="GO:0034605">
    <property type="term" value="P:cellular response to heat"/>
    <property type="evidence" value="ECO:0000314"/>
    <property type="project" value="UniProtKB"/>
</dbReference>
<dbReference type="GO" id="GO:0070301">
    <property type="term" value="P:cellular response to hydrogen peroxide"/>
    <property type="evidence" value="ECO:0000314"/>
    <property type="project" value="UniProtKB"/>
</dbReference>
<dbReference type="GO" id="GO:0071453">
    <property type="term" value="P:cellular response to oxygen levels"/>
    <property type="evidence" value="ECO:0000314"/>
    <property type="project" value="UniProtKB"/>
</dbReference>
<dbReference type="GO" id="GO:0071472">
    <property type="term" value="P:cellular response to salt stress"/>
    <property type="evidence" value="ECO:0000314"/>
    <property type="project" value="UniProtKB"/>
</dbReference>
<dbReference type="GO" id="GO:0042744">
    <property type="term" value="P:hydrogen peroxide catabolic process"/>
    <property type="evidence" value="ECO:0000250"/>
    <property type="project" value="UniProtKB"/>
</dbReference>
<dbReference type="CDD" id="cd00729">
    <property type="entry name" value="rubredoxin_SM"/>
    <property type="match status" value="1"/>
</dbReference>
<dbReference type="CDD" id="cd01046">
    <property type="entry name" value="Rubrerythrin_like"/>
    <property type="match status" value="1"/>
</dbReference>
<dbReference type="Gene3D" id="1.20.1260.10">
    <property type="match status" value="1"/>
</dbReference>
<dbReference type="Gene3D" id="2.20.28.10">
    <property type="match status" value="1"/>
</dbReference>
<dbReference type="InterPro" id="IPR052773">
    <property type="entry name" value="Anaerobic_Peroxidase-Rel"/>
</dbReference>
<dbReference type="InterPro" id="IPR012347">
    <property type="entry name" value="Ferritin-like"/>
</dbReference>
<dbReference type="InterPro" id="IPR009040">
    <property type="entry name" value="Ferritin-like_diiron"/>
</dbReference>
<dbReference type="InterPro" id="IPR009078">
    <property type="entry name" value="Ferritin-like_SF"/>
</dbReference>
<dbReference type="InterPro" id="IPR045236">
    <property type="entry name" value="RevRr_diiron-bd_dom"/>
</dbReference>
<dbReference type="InterPro" id="IPR003251">
    <property type="entry name" value="Rr_diiron-bd_dom"/>
</dbReference>
<dbReference type="InterPro" id="IPR024934">
    <property type="entry name" value="Rubredoxin-like_dom"/>
</dbReference>
<dbReference type="InterPro" id="IPR048574">
    <property type="entry name" value="RUBY_RBDX"/>
</dbReference>
<dbReference type="PANTHER" id="PTHR43339:SF1">
    <property type="entry name" value="RUBRERYTHRIN"/>
    <property type="match status" value="1"/>
</dbReference>
<dbReference type="PANTHER" id="PTHR43339">
    <property type="entry name" value="RUBRERYTHRIN-RELATED"/>
    <property type="match status" value="1"/>
</dbReference>
<dbReference type="Pfam" id="PF02915">
    <property type="entry name" value="Rubrerythrin"/>
    <property type="match status" value="1"/>
</dbReference>
<dbReference type="Pfam" id="PF21349">
    <property type="entry name" value="RUBY_RBDX"/>
    <property type="match status" value="1"/>
</dbReference>
<dbReference type="SUPFAM" id="SSF47240">
    <property type="entry name" value="Ferritin-like"/>
    <property type="match status" value="1"/>
</dbReference>
<dbReference type="SUPFAM" id="SSF57802">
    <property type="entry name" value="Rubredoxin-like"/>
    <property type="match status" value="1"/>
</dbReference>
<dbReference type="PROSITE" id="PS50905">
    <property type="entry name" value="FERRITIN_LIKE"/>
    <property type="match status" value="1"/>
</dbReference>
<dbReference type="PROSITE" id="PS50903">
    <property type="entry name" value="RUBREDOXIN_LIKE"/>
    <property type="match status" value="1"/>
</dbReference>
<proteinExistence type="evidence at protein level"/>
<evidence type="ECO:0000250" key="1"/>
<evidence type="ECO:0000255" key="2">
    <source>
        <dbReference type="PROSITE-ProRule" id="PRU00085"/>
    </source>
</evidence>
<evidence type="ECO:0000255" key="3">
    <source>
        <dbReference type="PROSITE-ProRule" id="PRU00241"/>
    </source>
</evidence>
<evidence type="ECO:0000269" key="4">
    <source>
    </source>
</evidence>
<evidence type="ECO:0000269" key="5">
    <source>
    </source>
</evidence>
<evidence type="ECO:0000269" key="6">
    <source>
    </source>
</evidence>
<evidence type="ECO:0000269" key="7">
    <source>
    </source>
</evidence>
<evidence type="ECO:0000269" key="8">
    <source>
    </source>
</evidence>
<evidence type="ECO:0000269" key="9">
    <source>
    </source>
</evidence>
<evidence type="ECO:0000269" key="10">
    <source>
    </source>
</evidence>